<proteinExistence type="evidence at protein level"/>
<sequence>GLKDMIKNLAKEAAVKLAGAVINKFSPQPQ</sequence>
<name>NTN1_PHYNA</name>
<keyword id="KW-0878">Amphibian defense peptide</keyword>
<keyword id="KW-0044">Antibiotic</keyword>
<keyword id="KW-0929">Antimicrobial</keyword>
<keyword id="KW-0903">Direct protein sequencing</keyword>
<keyword id="KW-0964">Secreted</keyword>
<protein>
    <recommendedName>
        <fullName evidence="2">Nattererin-1</fullName>
    </recommendedName>
</protein>
<feature type="peptide" id="PRO_0000438962" description="Nattererin-1" evidence="1">
    <location>
        <begin position="1"/>
        <end position="30"/>
    </location>
</feature>
<dbReference type="SMR" id="P86913"/>
<dbReference type="GO" id="GO:0005576">
    <property type="term" value="C:extracellular region"/>
    <property type="evidence" value="ECO:0000314"/>
    <property type="project" value="UniProtKB"/>
</dbReference>
<dbReference type="GO" id="GO:0042742">
    <property type="term" value="P:defense response to bacterium"/>
    <property type="evidence" value="ECO:0007669"/>
    <property type="project" value="UniProtKB-KW"/>
</dbReference>
<organism evidence="2">
    <name type="scientific">Physalaemus nattereri</name>
    <name type="common">Cuyaba dwarf frog</name>
    <name type="synonym">Eupemphix nattereri</name>
    <dbReference type="NCBI Taxonomy" id="248869"/>
    <lineage>
        <taxon>Eukaryota</taxon>
        <taxon>Metazoa</taxon>
        <taxon>Chordata</taxon>
        <taxon>Craniata</taxon>
        <taxon>Vertebrata</taxon>
        <taxon>Euteleostomi</taxon>
        <taxon>Amphibia</taxon>
        <taxon>Batrachia</taxon>
        <taxon>Anura</taxon>
        <taxon>Neobatrachia</taxon>
        <taxon>Hyloidea</taxon>
        <taxon>Leptodactylidae</taxon>
        <taxon>Leiuperinae</taxon>
        <taxon>Physalaemus</taxon>
    </lineage>
</organism>
<comment type="function">
    <text evidence="1">Probably has antibacterial activity.</text>
</comment>
<comment type="subcellular location">
    <subcellularLocation>
        <location evidence="1">Secreted</location>
    </subcellularLocation>
</comment>
<comment type="tissue specificity">
    <text evidence="4">Expressed by the skin glands.</text>
</comment>
<comment type="mass spectrometry"/>
<evidence type="ECO:0000269" key="1">
    <source>
    </source>
</evidence>
<evidence type="ECO:0000303" key="2">
    <source>
    </source>
</evidence>
<evidence type="ECO:0000305" key="3"/>
<evidence type="ECO:0000305" key="4">
    <source>
    </source>
</evidence>
<reference evidence="3" key="1">
    <citation type="journal article" date="2015" name="Rapid Commun. Mass Spectrom.">
        <title>Skin secretion peptides: the molecular facet of the deimatic behavior of the four-eyed frog, Physalaemus nattereri (Anura, Leptodactylidae).</title>
        <authorList>
            <person name="Barbosa E.A."/>
            <person name="Iembo T."/>
            <person name="Martins G.R."/>
            <person name="Silva L.P."/>
            <person name="Prates M.V."/>
            <person name="Andrade A.C."/>
            <person name="Bloch C. Jr."/>
        </authorList>
    </citation>
    <scope>PROTEIN SEQUENCE</scope>
    <scope>PROBABLE FUNCTION</scope>
    <scope>SUBCELLULAR LOCATION</scope>
    <scope>MASS SPECTROMETRY</scope>
    <scope>IDENTIFICATION BY MASS SPECTROMETRY</scope>
    <source>
        <tissue evidence="2">Skin secretion</tissue>
    </source>
</reference>
<accession>P86913</accession>